<sequence length="100" mass="10845">MIPLQHGLILAAILFVLGLTGLVIRRNLLFMLIGLEIMINASALAFVVAGSYWGQTDGQVMYILAISLAAAEASIGLALLLQLHRRRQNLNIDSVSEMRG</sequence>
<accession>Q0TFG7</accession>
<comment type="function">
    <text evidence="1">NDH-1 shuttles electrons from NADH, via FMN and iron-sulfur (Fe-S) centers, to quinones in the respiratory chain. The immediate electron acceptor for the enzyme in this species is believed to be ubiquinone. Couples the redox reaction to proton translocation (for every two electrons transferred, four hydrogen ions are translocated across the cytoplasmic membrane), and thus conserves the redox energy in a proton gradient.</text>
</comment>
<comment type="catalytic activity">
    <reaction evidence="1">
        <text>a quinone + NADH + 5 H(+)(in) = a quinol + NAD(+) + 4 H(+)(out)</text>
        <dbReference type="Rhea" id="RHEA:57888"/>
        <dbReference type="ChEBI" id="CHEBI:15378"/>
        <dbReference type="ChEBI" id="CHEBI:24646"/>
        <dbReference type="ChEBI" id="CHEBI:57540"/>
        <dbReference type="ChEBI" id="CHEBI:57945"/>
        <dbReference type="ChEBI" id="CHEBI:132124"/>
    </reaction>
</comment>
<comment type="subunit">
    <text evidence="1">NDH-1 is composed of 13 different subunits. Subunits NuoA, H, J, K, L, M, N constitute the membrane sector of the complex.</text>
</comment>
<comment type="subcellular location">
    <subcellularLocation>
        <location evidence="1">Cell inner membrane</location>
        <topology evidence="1">Multi-pass membrane protein</topology>
    </subcellularLocation>
</comment>
<comment type="similarity">
    <text evidence="1">Belongs to the complex I subunit 4L family.</text>
</comment>
<gene>
    <name evidence="1" type="primary">nuoK</name>
    <name type="ordered locus">ECP_2318</name>
</gene>
<dbReference type="EC" id="7.1.1.-" evidence="1"/>
<dbReference type="EMBL" id="CP000247">
    <property type="protein sequence ID" value="ABG70312.1"/>
    <property type="molecule type" value="Genomic_DNA"/>
</dbReference>
<dbReference type="RefSeq" id="WP_000612644.1">
    <property type="nucleotide sequence ID" value="NC_008253.1"/>
</dbReference>
<dbReference type="SMR" id="Q0TFG7"/>
<dbReference type="GeneID" id="93033872"/>
<dbReference type="KEGG" id="ecp:ECP_2318"/>
<dbReference type="HOGENOM" id="CLU_144724_0_1_6"/>
<dbReference type="Proteomes" id="UP000009182">
    <property type="component" value="Chromosome"/>
</dbReference>
<dbReference type="GO" id="GO:0030964">
    <property type="term" value="C:NADH dehydrogenase complex"/>
    <property type="evidence" value="ECO:0007669"/>
    <property type="project" value="TreeGrafter"/>
</dbReference>
<dbReference type="GO" id="GO:0005886">
    <property type="term" value="C:plasma membrane"/>
    <property type="evidence" value="ECO:0007669"/>
    <property type="project" value="UniProtKB-SubCell"/>
</dbReference>
<dbReference type="GO" id="GO:0050136">
    <property type="term" value="F:NADH:ubiquinone reductase (non-electrogenic) activity"/>
    <property type="evidence" value="ECO:0007669"/>
    <property type="project" value="UniProtKB-UniRule"/>
</dbReference>
<dbReference type="GO" id="GO:0048038">
    <property type="term" value="F:quinone binding"/>
    <property type="evidence" value="ECO:0007669"/>
    <property type="project" value="UniProtKB-KW"/>
</dbReference>
<dbReference type="GO" id="GO:0042773">
    <property type="term" value="P:ATP synthesis coupled electron transport"/>
    <property type="evidence" value="ECO:0007669"/>
    <property type="project" value="InterPro"/>
</dbReference>
<dbReference type="FunFam" id="1.10.287.3510:FF:000001">
    <property type="entry name" value="NADH-quinone oxidoreductase subunit K"/>
    <property type="match status" value="1"/>
</dbReference>
<dbReference type="Gene3D" id="1.10.287.3510">
    <property type="match status" value="1"/>
</dbReference>
<dbReference type="HAMAP" id="MF_01456">
    <property type="entry name" value="NDH1_NuoK"/>
    <property type="match status" value="1"/>
</dbReference>
<dbReference type="InterPro" id="IPR001133">
    <property type="entry name" value="NADH_UbQ_OxRdtase_chain4L/K"/>
</dbReference>
<dbReference type="InterPro" id="IPR039428">
    <property type="entry name" value="NUOK/Mnh_C1-like"/>
</dbReference>
<dbReference type="NCBIfam" id="NF004319">
    <property type="entry name" value="PRK05715.1-1"/>
    <property type="match status" value="1"/>
</dbReference>
<dbReference type="NCBIfam" id="NF004320">
    <property type="entry name" value="PRK05715.1-2"/>
    <property type="match status" value="1"/>
</dbReference>
<dbReference type="PANTHER" id="PTHR11434:SF16">
    <property type="entry name" value="NADH-UBIQUINONE OXIDOREDUCTASE CHAIN 4L"/>
    <property type="match status" value="1"/>
</dbReference>
<dbReference type="PANTHER" id="PTHR11434">
    <property type="entry name" value="NADH-UBIQUINONE OXIDOREDUCTASE SUBUNIT ND4L"/>
    <property type="match status" value="1"/>
</dbReference>
<dbReference type="Pfam" id="PF00420">
    <property type="entry name" value="Oxidored_q2"/>
    <property type="match status" value="1"/>
</dbReference>
<proteinExistence type="inferred from homology"/>
<name>NUOK_ECOL5</name>
<evidence type="ECO:0000255" key="1">
    <source>
        <dbReference type="HAMAP-Rule" id="MF_01456"/>
    </source>
</evidence>
<protein>
    <recommendedName>
        <fullName evidence="1">NADH-quinone oxidoreductase subunit K</fullName>
        <ecNumber evidence="1">7.1.1.-</ecNumber>
    </recommendedName>
    <alternativeName>
        <fullName evidence="1">NADH dehydrogenase I subunit K</fullName>
    </alternativeName>
    <alternativeName>
        <fullName evidence="1">NDH-1 subunit K</fullName>
    </alternativeName>
</protein>
<reference key="1">
    <citation type="journal article" date="2006" name="Mol. Microbiol.">
        <title>Role of pathogenicity island-associated integrases in the genome plasticity of uropathogenic Escherichia coli strain 536.</title>
        <authorList>
            <person name="Hochhut B."/>
            <person name="Wilde C."/>
            <person name="Balling G."/>
            <person name="Middendorf B."/>
            <person name="Dobrindt U."/>
            <person name="Brzuszkiewicz E."/>
            <person name="Gottschalk G."/>
            <person name="Carniel E."/>
            <person name="Hacker J."/>
        </authorList>
    </citation>
    <scope>NUCLEOTIDE SEQUENCE [LARGE SCALE GENOMIC DNA]</scope>
    <source>
        <strain>536 / UPEC</strain>
    </source>
</reference>
<feature type="chain" id="PRO_0000390055" description="NADH-quinone oxidoreductase subunit K">
    <location>
        <begin position="1"/>
        <end position="100"/>
    </location>
</feature>
<feature type="transmembrane region" description="Helical" evidence="1">
    <location>
        <begin position="4"/>
        <end position="24"/>
    </location>
</feature>
<feature type="transmembrane region" description="Helical" evidence="1">
    <location>
        <begin position="28"/>
        <end position="48"/>
    </location>
</feature>
<feature type="transmembrane region" description="Helical" evidence="1">
    <location>
        <begin position="60"/>
        <end position="80"/>
    </location>
</feature>
<keyword id="KW-0997">Cell inner membrane</keyword>
<keyword id="KW-1003">Cell membrane</keyword>
<keyword id="KW-0472">Membrane</keyword>
<keyword id="KW-0520">NAD</keyword>
<keyword id="KW-0874">Quinone</keyword>
<keyword id="KW-1278">Translocase</keyword>
<keyword id="KW-0812">Transmembrane</keyword>
<keyword id="KW-1133">Transmembrane helix</keyword>
<keyword id="KW-0813">Transport</keyword>
<keyword id="KW-0830">Ubiquinone</keyword>
<organism>
    <name type="scientific">Escherichia coli O6:K15:H31 (strain 536 / UPEC)</name>
    <dbReference type="NCBI Taxonomy" id="362663"/>
    <lineage>
        <taxon>Bacteria</taxon>
        <taxon>Pseudomonadati</taxon>
        <taxon>Pseudomonadota</taxon>
        <taxon>Gammaproteobacteria</taxon>
        <taxon>Enterobacterales</taxon>
        <taxon>Enterobacteriaceae</taxon>
        <taxon>Escherichia</taxon>
    </lineage>
</organism>